<dbReference type="EC" id="2.8.1.8" evidence="1"/>
<dbReference type="EMBL" id="BA000021">
    <property type="protein sequence ID" value="BAC24322.1"/>
    <property type="molecule type" value="Genomic_DNA"/>
</dbReference>
<dbReference type="SMR" id="Q8D325"/>
<dbReference type="STRING" id="36870.gene:10368664"/>
<dbReference type="KEGG" id="wbr:lipA"/>
<dbReference type="eggNOG" id="COG0320">
    <property type="taxonomic scope" value="Bacteria"/>
</dbReference>
<dbReference type="HOGENOM" id="CLU_033144_2_1_6"/>
<dbReference type="OrthoDB" id="9787898at2"/>
<dbReference type="UniPathway" id="UPA00538">
    <property type="reaction ID" value="UER00593"/>
</dbReference>
<dbReference type="Proteomes" id="UP000000562">
    <property type="component" value="Chromosome"/>
</dbReference>
<dbReference type="GO" id="GO:0005737">
    <property type="term" value="C:cytoplasm"/>
    <property type="evidence" value="ECO:0007669"/>
    <property type="project" value="UniProtKB-SubCell"/>
</dbReference>
<dbReference type="GO" id="GO:0051539">
    <property type="term" value="F:4 iron, 4 sulfur cluster binding"/>
    <property type="evidence" value="ECO:0007669"/>
    <property type="project" value="UniProtKB-UniRule"/>
</dbReference>
<dbReference type="GO" id="GO:0016992">
    <property type="term" value="F:lipoate synthase activity"/>
    <property type="evidence" value="ECO:0007669"/>
    <property type="project" value="UniProtKB-UniRule"/>
</dbReference>
<dbReference type="GO" id="GO:0046872">
    <property type="term" value="F:metal ion binding"/>
    <property type="evidence" value="ECO:0007669"/>
    <property type="project" value="UniProtKB-KW"/>
</dbReference>
<dbReference type="CDD" id="cd01335">
    <property type="entry name" value="Radical_SAM"/>
    <property type="match status" value="1"/>
</dbReference>
<dbReference type="FunFam" id="3.20.20.70:FF:000040">
    <property type="entry name" value="Lipoyl synthase"/>
    <property type="match status" value="1"/>
</dbReference>
<dbReference type="Gene3D" id="3.20.20.70">
    <property type="entry name" value="Aldolase class I"/>
    <property type="match status" value="1"/>
</dbReference>
<dbReference type="HAMAP" id="MF_00206">
    <property type="entry name" value="Lipoyl_synth"/>
    <property type="match status" value="1"/>
</dbReference>
<dbReference type="InterPro" id="IPR013785">
    <property type="entry name" value="Aldolase_TIM"/>
</dbReference>
<dbReference type="InterPro" id="IPR006638">
    <property type="entry name" value="Elp3/MiaA/NifB-like_rSAM"/>
</dbReference>
<dbReference type="InterPro" id="IPR031691">
    <property type="entry name" value="LIAS_N"/>
</dbReference>
<dbReference type="InterPro" id="IPR003698">
    <property type="entry name" value="Lipoyl_synth"/>
</dbReference>
<dbReference type="InterPro" id="IPR007197">
    <property type="entry name" value="rSAM"/>
</dbReference>
<dbReference type="NCBIfam" id="TIGR00510">
    <property type="entry name" value="lipA"/>
    <property type="match status" value="1"/>
</dbReference>
<dbReference type="NCBIfam" id="NF004019">
    <property type="entry name" value="PRK05481.1"/>
    <property type="match status" value="1"/>
</dbReference>
<dbReference type="NCBIfam" id="NF009544">
    <property type="entry name" value="PRK12928.1"/>
    <property type="match status" value="1"/>
</dbReference>
<dbReference type="PANTHER" id="PTHR10949">
    <property type="entry name" value="LIPOYL SYNTHASE"/>
    <property type="match status" value="1"/>
</dbReference>
<dbReference type="PANTHER" id="PTHR10949:SF0">
    <property type="entry name" value="LIPOYL SYNTHASE, MITOCHONDRIAL"/>
    <property type="match status" value="1"/>
</dbReference>
<dbReference type="Pfam" id="PF16881">
    <property type="entry name" value="LIAS_N"/>
    <property type="match status" value="1"/>
</dbReference>
<dbReference type="Pfam" id="PF04055">
    <property type="entry name" value="Radical_SAM"/>
    <property type="match status" value="1"/>
</dbReference>
<dbReference type="PIRSF" id="PIRSF005963">
    <property type="entry name" value="Lipoyl_synth"/>
    <property type="match status" value="1"/>
</dbReference>
<dbReference type="SFLD" id="SFLDF00271">
    <property type="entry name" value="lipoyl_synthase"/>
    <property type="match status" value="1"/>
</dbReference>
<dbReference type="SFLD" id="SFLDG01058">
    <property type="entry name" value="lipoyl_synthase_like"/>
    <property type="match status" value="1"/>
</dbReference>
<dbReference type="SMART" id="SM00729">
    <property type="entry name" value="Elp3"/>
    <property type="match status" value="1"/>
</dbReference>
<dbReference type="SUPFAM" id="SSF102114">
    <property type="entry name" value="Radical SAM enzymes"/>
    <property type="match status" value="1"/>
</dbReference>
<dbReference type="PROSITE" id="PS51918">
    <property type="entry name" value="RADICAL_SAM"/>
    <property type="match status" value="1"/>
</dbReference>
<protein>
    <recommendedName>
        <fullName evidence="1">Lipoyl synthase</fullName>
        <ecNumber evidence="1">2.8.1.8</ecNumber>
    </recommendedName>
    <alternativeName>
        <fullName evidence="1">Lip-syn</fullName>
        <shortName evidence="1">LS</shortName>
    </alternativeName>
    <alternativeName>
        <fullName evidence="1">Lipoate synthase</fullName>
    </alternativeName>
    <alternativeName>
        <fullName evidence="1">Lipoic acid synthase</fullName>
    </alternativeName>
    <alternativeName>
        <fullName evidence="1">Sulfur insertion protein LipA</fullName>
    </alternativeName>
</protein>
<sequence>MKSISYLNTKEKNKKKLSIPSKTIFAKENEYGLKKPNWLKIKLPLNNKKINKIKLIMRKNNLHTVCEEAACPNLAECFNRGTATFMILGSICTRRCPFCNVSSGRPSLVDTKEPENLSKAAIKMKLKHIVITSVDRDDLKDGGSEHFSNCIRFIRKKNPDIKIEILVPDFRGCTELALNNISTYPPDIFNHNLESIPRLYSKVRPGANYKRSLELLEKFNLINPNIPTKSGLMLGLGETKEEIIEVMKDLRKSYVSMITIGQYLRPTKNHLTVNRYVHPKEFRELNLIAFDLGFKHAMCGPLVRSSYHAENQINCY</sequence>
<comment type="function">
    <text evidence="1">Catalyzes the radical-mediated insertion of two sulfur atoms into the C-6 and C-8 positions of the octanoyl moiety bound to the lipoyl domains of lipoate-dependent enzymes, thereby converting the octanoylated domains into lipoylated derivatives.</text>
</comment>
<comment type="catalytic activity">
    <reaction evidence="1">
        <text>[[Fe-S] cluster scaffold protein carrying a second [4Fe-4S](2+) cluster] + N(6)-octanoyl-L-lysyl-[protein] + 2 oxidized [2Fe-2S]-[ferredoxin] + 2 S-adenosyl-L-methionine + 4 H(+) = [[Fe-S] cluster scaffold protein] + N(6)-[(R)-dihydrolipoyl]-L-lysyl-[protein] + 4 Fe(3+) + 2 hydrogen sulfide + 2 5'-deoxyadenosine + 2 L-methionine + 2 reduced [2Fe-2S]-[ferredoxin]</text>
        <dbReference type="Rhea" id="RHEA:16585"/>
        <dbReference type="Rhea" id="RHEA-COMP:9928"/>
        <dbReference type="Rhea" id="RHEA-COMP:10000"/>
        <dbReference type="Rhea" id="RHEA-COMP:10001"/>
        <dbReference type="Rhea" id="RHEA-COMP:10475"/>
        <dbReference type="Rhea" id="RHEA-COMP:14568"/>
        <dbReference type="Rhea" id="RHEA-COMP:14569"/>
        <dbReference type="ChEBI" id="CHEBI:15378"/>
        <dbReference type="ChEBI" id="CHEBI:17319"/>
        <dbReference type="ChEBI" id="CHEBI:29034"/>
        <dbReference type="ChEBI" id="CHEBI:29919"/>
        <dbReference type="ChEBI" id="CHEBI:33722"/>
        <dbReference type="ChEBI" id="CHEBI:33737"/>
        <dbReference type="ChEBI" id="CHEBI:33738"/>
        <dbReference type="ChEBI" id="CHEBI:57844"/>
        <dbReference type="ChEBI" id="CHEBI:59789"/>
        <dbReference type="ChEBI" id="CHEBI:78809"/>
        <dbReference type="ChEBI" id="CHEBI:83100"/>
        <dbReference type="EC" id="2.8.1.8"/>
    </reaction>
</comment>
<comment type="cofactor">
    <cofactor evidence="1">
        <name>[4Fe-4S] cluster</name>
        <dbReference type="ChEBI" id="CHEBI:49883"/>
    </cofactor>
    <text evidence="1">Binds 2 [4Fe-4S] clusters per subunit. One cluster is coordinated with 3 cysteines and an exchangeable S-adenosyl-L-methionine.</text>
</comment>
<comment type="pathway">
    <text evidence="1">Protein modification; protein lipoylation via endogenous pathway; protein N(6)-(lipoyl)lysine from octanoyl-[acyl-carrier-protein]: step 2/2.</text>
</comment>
<comment type="subcellular location">
    <subcellularLocation>
        <location evidence="1">Cytoplasm</location>
    </subcellularLocation>
</comment>
<comment type="similarity">
    <text evidence="1">Belongs to the radical SAM superfamily. Lipoyl synthase family.</text>
</comment>
<reference key="1">
    <citation type="journal article" date="2002" name="Nat. Genet.">
        <title>Genome sequence of the endocellular obligate symbiont of tsetse flies, Wigglesworthia glossinidia.</title>
        <authorList>
            <person name="Akman L."/>
            <person name="Yamashita A."/>
            <person name="Watanabe H."/>
            <person name="Oshima K."/>
            <person name="Shiba T."/>
            <person name="Hattori M."/>
            <person name="Aksoy S."/>
        </authorList>
    </citation>
    <scope>NUCLEOTIDE SEQUENCE [LARGE SCALE GENOMIC DNA]</scope>
</reference>
<keyword id="KW-0004">4Fe-4S</keyword>
<keyword id="KW-0963">Cytoplasm</keyword>
<keyword id="KW-0408">Iron</keyword>
<keyword id="KW-0411">Iron-sulfur</keyword>
<keyword id="KW-0479">Metal-binding</keyword>
<keyword id="KW-1185">Reference proteome</keyword>
<keyword id="KW-0949">S-adenosyl-L-methionine</keyword>
<keyword id="KW-0808">Transferase</keyword>
<proteinExistence type="inferred from homology"/>
<accession>Q8D325</accession>
<name>LIPA_WIGBR</name>
<feature type="chain" id="PRO_0000102381" description="Lipoyl synthase">
    <location>
        <begin position="1"/>
        <end position="316"/>
    </location>
</feature>
<feature type="domain" description="Radical SAM core" evidence="2">
    <location>
        <begin position="78"/>
        <end position="295"/>
    </location>
</feature>
<feature type="binding site" evidence="1">
    <location>
        <position position="66"/>
    </location>
    <ligand>
        <name>[4Fe-4S] cluster</name>
        <dbReference type="ChEBI" id="CHEBI:49883"/>
        <label>1</label>
    </ligand>
</feature>
<feature type="binding site" evidence="1">
    <location>
        <position position="71"/>
    </location>
    <ligand>
        <name>[4Fe-4S] cluster</name>
        <dbReference type="ChEBI" id="CHEBI:49883"/>
        <label>1</label>
    </ligand>
</feature>
<feature type="binding site" evidence="1">
    <location>
        <position position="77"/>
    </location>
    <ligand>
        <name>[4Fe-4S] cluster</name>
        <dbReference type="ChEBI" id="CHEBI:49883"/>
        <label>1</label>
    </ligand>
</feature>
<feature type="binding site" evidence="1">
    <location>
        <position position="92"/>
    </location>
    <ligand>
        <name>[4Fe-4S] cluster</name>
        <dbReference type="ChEBI" id="CHEBI:49883"/>
        <label>2</label>
        <note>4Fe-4S-S-AdoMet</note>
    </ligand>
</feature>
<feature type="binding site" evidence="1">
    <location>
        <position position="96"/>
    </location>
    <ligand>
        <name>[4Fe-4S] cluster</name>
        <dbReference type="ChEBI" id="CHEBI:49883"/>
        <label>2</label>
        <note>4Fe-4S-S-AdoMet</note>
    </ligand>
</feature>
<feature type="binding site" evidence="1">
    <location>
        <position position="99"/>
    </location>
    <ligand>
        <name>[4Fe-4S] cluster</name>
        <dbReference type="ChEBI" id="CHEBI:49883"/>
        <label>2</label>
        <note>4Fe-4S-S-AdoMet</note>
    </ligand>
</feature>
<feature type="binding site" evidence="1">
    <location>
        <position position="306"/>
    </location>
    <ligand>
        <name>[4Fe-4S] cluster</name>
        <dbReference type="ChEBI" id="CHEBI:49883"/>
        <label>1</label>
    </ligand>
</feature>
<gene>
    <name evidence="1" type="primary">lipA</name>
    <name type="ordered locus">WIGBR1760</name>
</gene>
<organism>
    <name type="scientific">Wigglesworthia glossinidia brevipalpis</name>
    <dbReference type="NCBI Taxonomy" id="36870"/>
    <lineage>
        <taxon>Bacteria</taxon>
        <taxon>Pseudomonadati</taxon>
        <taxon>Pseudomonadota</taxon>
        <taxon>Gammaproteobacteria</taxon>
        <taxon>Enterobacterales</taxon>
        <taxon>Erwiniaceae</taxon>
        <taxon>Wigglesworthia</taxon>
    </lineage>
</organism>
<evidence type="ECO:0000255" key="1">
    <source>
        <dbReference type="HAMAP-Rule" id="MF_00206"/>
    </source>
</evidence>
<evidence type="ECO:0000255" key="2">
    <source>
        <dbReference type="PROSITE-ProRule" id="PRU01266"/>
    </source>
</evidence>